<geneLocation type="mitochondrion"/>
<protein>
    <recommendedName>
        <fullName>Cytochrome b</fullName>
    </recommendedName>
    <alternativeName>
        <fullName>Complex III subunit 3</fullName>
    </alternativeName>
    <alternativeName>
        <fullName>Complex III subunit III</fullName>
    </alternativeName>
    <alternativeName>
        <fullName>Cytochrome b-c1 complex subunit 3</fullName>
    </alternativeName>
    <alternativeName>
        <fullName>Ubiquinol-cytochrome-c reductase complex cytochrome b subunit</fullName>
    </alternativeName>
</protein>
<accession>Q35131</accession>
<accession>Q94Z60</accession>
<keyword id="KW-0249">Electron transport</keyword>
<keyword id="KW-0349">Heme</keyword>
<keyword id="KW-0408">Iron</keyword>
<keyword id="KW-0472">Membrane</keyword>
<keyword id="KW-0479">Metal-binding</keyword>
<keyword id="KW-0496">Mitochondrion</keyword>
<keyword id="KW-0999">Mitochondrion inner membrane</keyword>
<keyword id="KW-0679">Respiratory chain</keyword>
<keyword id="KW-0812">Transmembrane</keyword>
<keyword id="KW-1133">Transmembrane helix</keyword>
<keyword id="KW-0813">Transport</keyword>
<keyword id="KW-0830">Ubiquinone</keyword>
<gene>
    <name type="primary">MT-CYB</name>
    <name type="synonym">COB</name>
    <name type="synonym">CYTB</name>
    <name type="synonym">MTCYB</name>
</gene>
<reference key="1">
    <citation type="journal article" date="1996" name="Proc. Natl. Acad. Sci. U.S.A.">
        <title>Ancient single origin for Malagasy primates.</title>
        <authorList>
            <person name="Yoder A.D."/>
            <person name="Cartmill M."/>
            <person name="Ruvolo M."/>
            <person name="Smith K."/>
            <person name="Vilgalys R."/>
        </authorList>
    </citation>
    <scope>NUCLEOTIDE SEQUENCE [GENOMIC DNA]</scope>
</reference>
<reference key="2">
    <citation type="journal article" date="2000" name="Hereditas">
        <title>Molecular estimates of primate divergences and new hypotheses for primate dispersal and the origin of modern humans.</title>
        <authorList>
            <person name="Arnason U."/>
            <person name="Gullberg A."/>
            <person name="Burguete A.S."/>
            <person name="Janke A."/>
        </authorList>
    </citation>
    <scope>NUCLEOTIDE SEQUENCE [GENOMIC DNA]</scope>
</reference>
<comment type="function">
    <text evidence="2">Component of the ubiquinol-cytochrome c reductase complex (complex III or cytochrome b-c1 complex) that is part of the mitochondrial respiratory chain. The b-c1 complex mediates electron transfer from ubiquinol to cytochrome c. Contributes to the generation of a proton gradient across the mitochondrial membrane that is then used for ATP synthesis.</text>
</comment>
<comment type="cofactor">
    <cofactor evidence="2">
        <name>heme b</name>
        <dbReference type="ChEBI" id="CHEBI:60344"/>
    </cofactor>
    <text evidence="2">Binds 2 heme b groups non-covalently.</text>
</comment>
<comment type="subunit">
    <text evidence="2">The cytochrome bc1 complex contains 11 subunits: 3 respiratory subunits (MT-CYB, CYC1 and UQCRFS1), 2 core proteins (UQCRC1 and UQCRC2) and 6 low-molecular weight proteins (UQCRH/QCR6, UQCRB/QCR7, UQCRQ/QCR8, UQCR10/QCR9, UQCR11/QCR10 and a cleavage product of UQCRFS1). This cytochrome bc1 complex then forms a dimer.</text>
</comment>
<comment type="subcellular location">
    <subcellularLocation>
        <location evidence="2">Mitochondrion inner membrane</location>
        <topology evidence="2">Multi-pass membrane protein</topology>
    </subcellularLocation>
</comment>
<comment type="miscellaneous">
    <text evidence="1">Heme 1 (or BL or b562) is low-potential and absorbs at about 562 nm, and heme 2 (or BH or b566) is high-potential and absorbs at about 566 nm.</text>
</comment>
<comment type="similarity">
    <text evidence="3 4">Belongs to the cytochrome b family.</text>
</comment>
<comment type="caution">
    <text evidence="2">The full-length protein contains only eight transmembrane helices, not nine as predicted by bioinformatics tools.</text>
</comment>
<feature type="chain" id="PRO_0000061287" description="Cytochrome b">
    <location>
        <begin position="1"/>
        <end position="379"/>
    </location>
</feature>
<feature type="transmembrane region" description="Helical" evidence="2">
    <location>
        <begin position="33"/>
        <end position="53"/>
    </location>
</feature>
<feature type="transmembrane region" description="Helical" evidence="2">
    <location>
        <begin position="77"/>
        <end position="98"/>
    </location>
</feature>
<feature type="transmembrane region" description="Helical" evidence="2">
    <location>
        <begin position="113"/>
        <end position="133"/>
    </location>
</feature>
<feature type="transmembrane region" description="Helical" evidence="2">
    <location>
        <begin position="178"/>
        <end position="198"/>
    </location>
</feature>
<feature type="transmembrane region" description="Helical" evidence="2">
    <location>
        <begin position="226"/>
        <end position="246"/>
    </location>
</feature>
<feature type="transmembrane region" description="Helical" evidence="2">
    <location>
        <begin position="288"/>
        <end position="308"/>
    </location>
</feature>
<feature type="transmembrane region" description="Helical" evidence="2">
    <location>
        <begin position="320"/>
        <end position="340"/>
    </location>
</feature>
<feature type="transmembrane region" description="Helical" evidence="2">
    <location>
        <begin position="347"/>
        <end position="367"/>
    </location>
</feature>
<feature type="binding site" description="axial binding residue" evidence="2">
    <location>
        <position position="83"/>
    </location>
    <ligand>
        <name>heme b</name>
        <dbReference type="ChEBI" id="CHEBI:60344"/>
        <label>b562</label>
    </ligand>
    <ligandPart>
        <name>Fe</name>
        <dbReference type="ChEBI" id="CHEBI:18248"/>
    </ligandPart>
</feature>
<feature type="binding site" description="axial binding residue" evidence="2">
    <location>
        <position position="97"/>
    </location>
    <ligand>
        <name>heme b</name>
        <dbReference type="ChEBI" id="CHEBI:60344"/>
        <label>b566</label>
    </ligand>
    <ligandPart>
        <name>Fe</name>
        <dbReference type="ChEBI" id="CHEBI:18248"/>
    </ligandPart>
</feature>
<feature type="binding site" description="axial binding residue" evidence="2">
    <location>
        <position position="182"/>
    </location>
    <ligand>
        <name>heme b</name>
        <dbReference type="ChEBI" id="CHEBI:60344"/>
        <label>b562</label>
    </ligand>
    <ligandPart>
        <name>Fe</name>
        <dbReference type="ChEBI" id="CHEBI:18248"/>
    </ligandPart>
</feature>
<feature type="binding site" description="axial binding residue" evidence="2">
    <location>
        <position position="196"/>
    </location>
    <ligand>
        <name>heme b</name>
        <dbReference type="ChEBI" id="CHEBI:60344"/>
        <label>b566</label>
    </ligand>
    <ligandPart>
        <name>Fe</name>
        <dbReference type="ChEBI" id="CHEBI:18248"/>
    </ligandPart>
</feature>
<feature type="binding site" evidence="2">
    <location>
        <position position="201"/>
    </location>
    <ligand>
        <name>a ubiquinone</name>
        <dbReference type="ChEBI" id="CHEBI:16389"/>
    </ligand>
</feature>
<feature type="sequence conflict" description="In Ref. 2; CAC38002." evidence="5" ref="2">
    <original>S</original>
    <variation>T</variation>
    <location>
        <position position="60"/>
    </location>
</feature>
<evidence type="ECO:0000250" key="1"/>
<evidence type="ECO:0000250" key="2">
    <source>
        <dbReference type="UniProtKB" id="P00157"/>
    </source>
</evidence>
<evidence type="ECO:0000255" key="3">
    <source>
        <dbReference type="PROSITE-ProRule" id="PRU00967"/>
    </source>
</evidence>
<evidence type="ECO:0000255" key="4">
    <source>
        <dbReference type="PROSITE-ProRule" id="PRU00968"/>
    </source>
</evidence>
<evidence type="ECO:0000305" key="5"/>
<sequence length="379" mass="42523">MTNIRKNHPLMKIINHSFIDLPAPSNISSWWNFGSLLGLCLTIQIVTGLFLAMHYTSDTSTAFSSVAHICRDVNYGWIIRYIHANGASMFFFCLFIHIGRGLYYGSFTLLDTWNIGIMLLIAVMATAFMGYVLPWGQMSFWGATVITNLLSAIPYIGTNLVEWVWGGFSVDKATLTRFFAFHFILPFIVAALVVIHLIFLHETGSNNPSGISSDSDKIPFHPYYSLKDLLGVVFLLATLSILVLFSPDLLGDPDNYTPANPLVTPPHIKPEWYFLFAYAILRSIPNKLGGVLALAMSILILALIPHLHTAKQRSMMFRPLSQCLFWVLVANLLTLTWIGGQPVENPFIIIGQTASILYFLTILILMPLTSLFENKLLKW</sequence>
<name>CYB_NYCCO</name>
<organism>
    <name type="scientific">Nycticebus coucang</name>
    <name type="common">Slow loris</name>
    <dbReference type="NCBI Taxonomy" id="9470"/>
    <lineage>
        <taxon>Eukaryota</taxon>
        <taxon>Metazoa</taxon>
        <taxon>Chordata</taxon>
        <taxon>Craniata</taxon>
        <taxon>Vertebrata</taxon>
        <taxon>Euteleostomi</taxon>
        <taxon>Mammalia</taxon>
        <taxon>Eutheria</taxon>
        <taxon>Euarchontoglires</taxon>
        <taxon>Primates</taxon>
        <taxon>Strepsirrhini</taxon>
        <taxon>Lorisiformes</taxon>
        <taxon>Lorisidae</taxon>
        <taxon>Nycticebus</taxon>
    </lineage>
</organism>
<dbReference type="EMBL" id="U53580">
    <property type="protein sequence ID" value="AAC50530.1"/>
    <property type="molecule type" value="Genomic_DNA"/>
</dbReference>
<dbReference type="EMBL" id="AJ309867">
    <property type="protein sequence ID" value="CAC38002.1"/>
    <property type="molecule type" value="Genomic_DNA"/>
</dbReference>
<dbReference type="RefSeq" id="NP_114359.1">
    <property type="nucleotide sequence ID" value="NC_002765.1"/>
</dbReference>
<dbReference type="SMR" id="Q35131"/>
<dbReference type="GeneID" id="803055"/>
<dbReference type="CTD" id="4519"/>
<dbReference type="GO" id="GO:0005743">
    <property type="term" value="C:mitochondrial inner membrane"/>
    <property type="evidence" value="ECO:0007669"/>
    <property type="project" value="UniProtKB-SubCell"/>
</dbReference>
<dbReference type="GO" id="GO:0045275">
    <property type="term" value="C:respiratory chain complex III"/>
    <property type="evidence" value="ECO:0007669"/>
    <property type="project" value="InterPro"/>
</dbReference>
<dbReference type="GO" id="GO:0046872">
    <property type="term" value="F:metal ion binding"/>
    <property type="evidence" value="ECO:0007669"/>
    <property type="project" value="UniProtKB-KW"/>
</dbReference>
<dbReference type="GO" id="GO:0008121">
    <property type="term" value="F:ubiquinol-cytochrome-c reductase activity"/>
    <property type="evidence" value="ECO:0007669"/>
    <property type="project" value="InterPro"/>
</dbReference>
<dbReference type="GO" id="GO:0006122">
    <property type="term" value="P:mitochondrial electron transport, ubiquinol to cytochrome c"/>
    <property type="evidence" value="ECO:0007669"/>
    <property type="project" value="TreeGrafter"/>
</dbReference>
<dbReference type="CDD" id="cd00290">
    <property type="entry name" value="cytochrome_b_C"/>
    <property type="match status" value="1"/>
</dbReference>
<dbReference type="CDD" id="cd00284">
    <property type="entry name" value="Cytochrome_b_N"/>
    <property type="match status" value="1"/>
</dbReference>
<dbReference type="FunFam" id="1.20.810.10:FF:000002">
    <property type="entry name" value="Cytochrome b"/>
    <property type="match status" value="1"/>
</dbReference>
<dbReference type="Gene3D" id="1.20.810.10">
    <property type="entry name" value="Cytochrome Bc1 Complex, Chain C"/>
    <property type="match status" value="1"/>
</dbReference>
<dbReference type="InterPro" id="IPR005798">
    <property type="entry name" value="Cyt_b/b6_C"/>
</dbReference>
<dbReference type="InterPro" id="IPR036150">
    <property type="entry name" value="Cyt_b/b6_C_sf"/>
</dbReference>
<dbReference type="InterPro" id="IPR005797">
    <property type="entry name" value="Cyt_b/b6_N"/>
</dbReference>
<dbReference type="InterPro" id="IPR027387">
    <property type="entry name" value="Cytb/b6-like_sf"/>
</dbReference>
<dbReference type="InterPro" id="IPR030689">
    <property type="entry name" value="Cytochrome_b"/>
</dbReference>
<dbReference type="InterPro" id="IPR048260">
    <property type="entry name" value="Cytochrome_b_C_euk/bac"/>
</dbReference>
<dbReference type="InterPro" id="IPR048259">
    <property type="entry name" value="Cytochrome_b_N_euk/bac"/>
</dbReference>
<dbReference type="InterPro" id="IPR016174">
    <property type="entry name" value="Di-haem_cyt_TM"/>
</dbReference>
<dbReference type="PANTHER" id="PTHR19271">
    <property type="entry name" value="CYTOCHROME B"/>
    <property type="match status" value="1"/>
</dbReference>
<dbReference type="PANTHER" id="PTHR19271:SF16">
    <property type="entry name" value="CYTOCHROME B"/>
    <property type="match status" value="1"/>
</dbReference>
<dbReference type="Pfam" id="PF00032">
    <property type="entry name" value="Cytochrom_B_C"/>
    <property type="match status" value="1"/>
</dbReference>
<dbReference type="Pfam" id="PF00033">
    <property type="entry name" value="Cytochrome_B"/>
    <property type="match status" value="1"/>
</dbReference>
<dbReference type="PIRSF" id="PIRSF038885">
    <property type="entry name" value="COB"/>
    <property type="match status" value="1"/>
</dbReference>
<dbReference type="SUPFAM" id="SSF81648">
    <property type="entry name" value="a domain/subunit of cytochrome bc1 complex (Ubiquinol-cytochrome c reductase)"/>
    <property type="match status" value="1"/>
</dbReference>
<dbReference type="SUPFAM" id="SSF81342">
    <property type="entry name" value="Transmembrane di-heme cytochromes"/>
    <property type="match status" value="1"/>
</dbReference>
<dbReference type="PROSITE" id="PS51003">
    <property type="entry name" value="CYTB_CTER"/>
    <property type="match status" value="1"/>
</dbReference>
<dbReference type="PROSITE" id="PS51002">
    <property type="entry name" value="CYTB_NTER"/>
    <property type="match status" value="1"/>
</dbReference>
<proteinExistence type="inferred from homology"/>